<accession>Q7U9W8</accession>
<evidence type="ECO:0000255" key="1">
    <source>
        <dbReference type="HAMAP-Rule" id="MF_00023"/>
    </source>
</evidence>
<feature type="chain" id="PRO_0000103052" description="SsrA-binding protein">
    <location>
        <begin position="1"/>
        <end position="166"/>
    </location>
</feature>
<sequence>MAKGGAKKAAAAAARAAANRMLADNRQARHQYEILETLETGIELVGTEVKSIRNGKANLRDGFCLIRNGELQLHNVHISPHSHAGAYFNHDPLRTRKLLAHRREIDKLRGQLDQKGLALIPLNIHLKGSWIKLTIGLGKGRKLHDKRAAEKEKQSKKEVKAAIARF</sequence>
<comment type="function">
    <text evidence="1">Required for rescue of stalled ribosomes mediated by trans-translation. Binds to transfer-messenger RNA (tmRNA), required for stable association of tmRNA with ribosomes. tmRNA and SmpB together mimic tRNA shape, replacing the anticodon stem-loop with SmpB. tmRNA is encoded by the ssrA gene; the 2 termini fold to resemble tRNA(Ala) and it encodes a 'tag peptide', a short internal open reading frame. During trans-translation Ala-aminoacylated tmRNA acts like a tRNA, entering the A-site of stalled ribosomes, displacing the stalled mRNA. The ribosome then switches to translate the ORF on the tmRNA; the nascent peptide is terminated with the 'tag peptide' encoded by the tmRNA and targeted for degradation. The ribosome is freed to recommence translation, which seems to be the essential function of trans-translation.</text>
</comment>
<comment type="subcellular location">
    <subcellularLocation>
        <location evidence="1">Cytoplasm</location>
    </subcellularLocation>
    <text evidence="1">The tmRNA-SmpB complex associates with stalled 70S ribosomes.</text>
</comment>
<comment type="similarity">
    <text evidence="1">Belongs to the SmpB family.</text>
</comment>
<organism>
    <name type="scientific">Parasynechococcus marenigrum (strain WH8102)</name>
    <dbReference type="NCBI Taxonomy" id="84588"/>
    <lineage>
        <taxon>Bacteria</taxon>
        <taxon>Bacillati</taxon>
        <taxon>Cyanobacteriota</taxon>
        <taxon>Cyanophyceae</taxon>
        <taxon>Synechococcales</taxon>
        <taxon>Prochlorococcaceae</taxon>
        <taxon>Parasynechococcus</taxon>
        <taxon>Parasynechococcus marenigrum</taxon>
    </lineage>
</organism>
<proteinExistence type="inferred from homology"/>
<gene>
    <name evidence="1" type="primary">smpB</name>
    <name type="ordered locus">SYNW0134</name>
</gene>
<reference key="1">
    <citation type="journal article" date="2003" name="Nature">
        <title>The genome of a motile marine Synechococcus.</title>
        <authorList>
            <person name="Palenik B."/>
            <person name="Brahamsha B."/>
            <person name="Larimer F.W."/>
            <person name="Land M.L."/>
            <person name="Hauser L."/>
            <person name="Chain P."/>
            <person name="Lamerdin J.E."/>
            <person name="Regala W."/>
            <person name="Allen E.E."/>
            <person name="McCarren J."/>
            <person name="Paulsen I.T."/>
            <person name="Dufresne A."/>
            <person name="Partensky F."/>
            <person name="Webb E.A."/>
            <person name="Waterbury J."/>
        </authorList>
    </citation>
    <scope>NUCLEOTIDE SEQUENCE [LARGE SCALE GENOMIC DNA]</scope>
    <source>
        <strain>WH8102</strain>
    </source>
</reference>
<dbReference type="EMBL" id="BX569689">
    <property type="protein sequence ID" value="CAE06649.1"/>
    <property type="molecule type" value="Genomic_DNA"/>
</dbReference>
<dbReference type="RefSeq" id="WP_011127011.1">
    <property type="nucleotide sequence ID" value="NC_005070.1"/>
</dbReference>
<dbReference type="SMR" id="Q7U9W8"/>
<dbReference type="STRING" id="84588.SYNW0134"/>
<dbReference type="KEGG" id="syw:SYNW0134"/>
<dbReference type="eggNOG" id="COG0691">
    <property type="taxonomic scope" value="Bacteria"/>
</dbReference>
<dbReference type="HOGENOM" id="CLU_108953_0_1_3"/>
<dbReference type="Proteomes" id="UP000001422">
    <property type="component" value="Chromosome"/>
</dbReference>
<dbReference type="GO" id="GO:0005829">
    <property type="term" value="C:cytosol"/>
    <property type="evidence" value="ECO:0007669"/>
    <property type="project" value="TreeGrafter"/>
</dbReference>
<dbReference type="GO" id="GO:0003723">
    <property type="term" value="F:RNA binding"/>
    <property type="evidence" value="ECO:0007669"/>
    <property type="project" value="UniProtKB-UniRule"/>
</dbReference>
<dbReference type="GO" id="GO:0070929">
    <property type="term" value="P:trans-translation"/>
    <property type="evidence" value="ECO:0007669"/>
    <property type="project" value="UniProtKB-UniRule"/>
</dbReference>
<dbReference type="CDD" id="cd09294">
    <property type="entry name" value="SmpB"/>
    <property type="match status" value="1"/>
</dbReference>
<dbReference type="Gene3D" id="2.40.280.10">
    <property type="match status" value="1"/>
</dbReference>
<dbReference type="HAMAP" id="MF_00023">
    <property type="entry name" value="SmpB"/>
    <property type="match status" value="1"/>
</dbReference>
<dbReference type="InterPro" id="IPR023620">
    <property type="entry name" value="SmpB"/>
</dbReference>
<dbReference type="InterPro" id="IPR000037">
    <property type="entry name" value="SsrA-bd_prot"/>
</dbReference>
<dbReference type="InterPro" id="IPR020081">
    <property type="entry name" value="SsrA-bd_prot_CS"/>
</dbReference>
<dbReference type="NCBIfam" id="NF003843">
    <property type="entry name" value="PRK05422.1"/>
    <property type="match status" value="1"/>
</dbReference>
<dbReference type="NCBIfam" id="TIGR00086">
    <property type="entry name" value="smpB"/>
    <property type="match status" value="1"/>
</dbReference>
<dbReference type="PANTHER" id="PTHR30308:SF2">
    <property type="entry name" value="SSRA-BINDING PROTEIN"/>
    <property type="match status" value="1"/>
</dbReference>
<dbReference type="PANTHER" id="PTHR30308">
    <property type="entry name" value="TMRNA-BINDING COMPONENT OF TRANS-TRANSLATION TAGGING COMPLEX"/>
    <property type="match status" value="1"/>
</dbReference>
<dbReference type="Pfam" id="PF01668">
    <property type="entry name" value="SmpB"/>
    <property type="match status" value="1"/>
</dbReference>
<dbReference type="SUPFAM" id="SSF74982">
    <property type="entry name" value="Small protein B (SmpB)"/>
    <property type="match status" value="1"/>
</dbReference>
<dbReference type="PROSITE" id="PS01317">
    <property type="entry name" value="SSRP"/>
    <property type="match status" value="1"/>
</dbReference>
<protein>
    <recommendedName>
        <fullName evidence="1">SsrA-binding protein</fullName>
    </recommendedName>
    <alternativeName>
        <fullName evidence="1">Small protein B</fullName>
    </alternativeName>
</protein>
<name>SSRP_PARMW</name>
<keyword id="KW-0963">Cytoplasm</keyword>
<keyword id="KW-0694">RNA-binding</keyword>